<organism>
    <name type="scientific">Brucella melitensis biotype 2 (strain ATCC 23457)</name>
    <dbReference type="NCBI Taxonomy" id="546272"/>
    <lineage>
        <taxon>Bacteria</taxon>
        <taxon>Pseudomonadati</taxon>
        <taxon>Pseudomonadota</taxon>
        <taxon>Alphaproteobacteria</taxon>
        <taxon>Hyphomicrobiales</taxon>
        <taxon>Brucellaceae</taxon>
        <taxon>Brucella/Ochrobactrum group</taxon>
        <taxon>Brucella</taxon>
    </lineage>
</organism>
<protein>
    <recommendedName>
        <fullName evidence="1">Large ribosomal subunit protein bL17</fullName>
    </recommendedName>
    <alternativeName>
        <fullName evidence="2">50S ribosomal protein L17</fullName>
    </alternativeName>
</protein>
<proteinExistence type="inferred from homology"/>
<sequence>MRHGNGYRKLNRTASHRKAMFANMAASLIEHEQIVTTLPKAKEIRPIVEKLVTLGKRGDLHARRQAISAIRDVRLVAKLFDTLAARYATRNGGYIRIMKAGFRAGDNAPLAVVEFVERDVDAKGKADRARVEAEAAAEADAA</sequence>
<accession>C0RJH5</accession>
<reference key="1">
    <citation type="submission" date="2009-03" db="EMBL/GenBank/DDBJ databases">
        <title>Brucella melitensis ATCC 23457 whole genome shotgun sequencing project.</title>
        <authorList>
            <person name="Setubal J.C."/>
            <person name="Boyle S."/>
            <person name="Crasta O.R."/>
            <person name="Gillespie J.J."/>
            <person name="Kenyon R.W."/>
            <person name="Lu J."/>
            <person name="Mane S."/>
            <person name="Nagrani S."/>
            <person name="Shallom J.M."/>
            <person name="Shallom S."/>
            <person name="Shukla M."/>
            <person name="Snyder E.E."/>
            <person name="Sobral B.W."/>
            <person name="Wattam A.R."/>
            <person name="Will R."/>
            <person name="Williams K."/>
            <person name="Yoo H."/>
            <person name="Munk C."/>
            <person name="Tapia R."/>
            <person name="Han C."/>
            <person name="Detter J.C."/>
            <person name="Bruce D."/>
            <person name="Brettin T.S."/>
        </authorList>
    </citation>
    <scope>NUCLEOTIDE SEQUENCE [LARGE SCALE GENOMIC DNA]</scope>
    <source>
        <strain>ATCC 23457</strain>
    </source>
</reference>
<name>RL17_BRUMB</name>
<keyword id="KW-0687">Ribonucleoprotein</keyword>
<keyword id="KW-0689">Ribosomal protein</keyword>
<feature type="chain" id="PRO_1000184004" description="Large ribosomal subunit protein bL17">
    <location>
        <begin position="1"/>
        <end position="142"/>
    </location>
</feature>
<evidence type="ECO:0000255" key="1">
    <source>
        <dbReference type="HAMAP-Rule" id="MF_01368"/>
    </source>
</evidence>
<evidence type="ECO:0000305" key="2"/>
<comment type="subunit">
    <text evidence="1">Part of the 50S ribosomal subunit. Contacts protein L32.</text>
</comment>
<comment type="similarity">
    <text evidence="1">Belongs to the bacterial ribosomal protein bL17 family.</text>
</comment>
<gene>
    <name evidence="1" type="primary">rplQ</name>
    <name type="ordered locus">BMEA_A1252</name>
</gene>
<dbReference type="EMBL" id="CP001488">
    <property type="protein sequence ID" value="ACO00983.1"/>
    <property type="molecule type" value="Genomic_DNA"/>
</dbReference>
<dbReference type="RefSeq" id="WP_002964337.1">
    <property type="nucleotide sequence ID" value="NC_012441.1"/>
</dbReference>
<dbReference type="SMR" id="C0RJH5"/>
<dbReference type="GeneID" id="93016464"/>
<dbReference type="KEGG" id="bmi:BMEA_A1252"/>
<dbReference type="HOGENOM" id="CLU_074407_2_0_5"/>
<dbReference type="Proteomes" id="UP000001748">
    <property type="component" value="Chromosome I"/>
</dbReference>
<dbReference type="GO" id="GO:0022625">
    <property type="term" value="C:cytosolic large ribosomal subunit"/>
    <property type="evidence" value="ECO:0007669"/>
    <property type="project" value="TreeGrafter"/>
</dbReference>
<dbReference type="GO" id="GO:0003735">
    <property type="term" value="F:structural constituent of ribosome"/>
    <property type="evidence" value="ECO:0007669"/>
    <property type="project" value="InterPro"/>
</dbReference>
<dbReference type="GO" id="GO:0006412">
    <property type="term" value="P:translation"/>
    <property type="evidence" value="ECO:0007669"/>
    <property type="project" value="UniProtKB-UniRule"/>
</dbReference>
<dbReference type="FunFam" id="3.90.1030.10:FF:000001">
    <property type="entry name" value="50S ribosomal protein L17"/>
    <property type="match status" value="1"/>
</dbReference>
<dbReference type="Gene3D" id="3.90.1030.10">
    <property type="entry name" value="Ribosomal protein L17"/>
    <property type="match status" value="1"/>
</dbReference>
<dbReference type="HAMAP" id="MF_01368">
    <property type="entry name" value="Ribosomal_bL17"/>
    <property type="match status" value="1"/>
</dbReference>
<dbReference type="InterPro" id="IPR000456">
    <property type="entry name" value="Ribosomal_bL17"/>
</dbReference>
<dbReference type="InterPro" id="IPR047859">
    <property type="entry name" value="Ribosomal_bL17_CS"/>
</dbReference>
<dbReference type="InterPro" id="IPR036373">
    <property type="entry name" value="Ribosomal_bL17_sf"/>
</dbReference>
<dbReference type="NCBIfam" id="TIGR00059">
    <property type="entry name" value="L17"/>
    <property type="match status" value="1"/>
</dbReference>
<dbReference type="PANTHER" id="PTHR14413:SF16">
    <property type="entry name" value="LARGE RIBOSOMAL SUBUNIT PROTEIN BL17M"/>
    <property type="match status" value="1"/>
</dbReference>
<dbReference type="PANTHER" id="PTHR14413">
    <property type="entry name" value="RIBOSOMAL PROTEIN L17"/>
    <property type="match status" value="1"/>
</dbReference>
<dbReference type="Pfam" id="PF01196">
    <property type="entry name" value="Ribosomal_L17"/>
    <property type="match status" value="1"/>
</dbReference>
<dbReference type="SUPFAM" id="SSF64263">
    <property type="entry name" value="Prokaryotic ribosomal protein L17"/>
    <property type="match status" value="1"/>
</dbReference>
<dbReference type="PROSITE" id="PS01167">
    <property type="entry name" value="RIBOSOMAL_L17"/>
    <property type="match status" value="1"/>
</dbReference>